<organism>
    <name type="scientific">Synechococcus elongatus (strain ATCC 33912 / PCC 7942 / FACHB-805)</name>
    <name type="common">Anacystis nidulans R2</name>
    <dbReference type="NCBI Taxonomy" id="1140"/>
    <lineage>
        <taxon>Bacteria</taxon>
        <taxon>Bacillati</taxon>
        <taxon>Cyanobacteriota</taxon>
        <taxon>Cyanophyceae</taxon>
        <taxon>Synechococcales</taxon>
        <taxon>Synechococcaceae</taxon>
        <taxon>Synechococcus</taxon>
    </lineage>
</organism>
<gene>
    <name evidence="1" type="primary">psbC</name>
    <name type="ordered locus">Synpcc7942_0656</name>
</gene>
<keyword id="KW-0148">Chlorophyll</keyword>
<keyword id="KW-0157">Chromophore</keyword>
<keyword id="KW-0464">Manganese</keyword>
<keyword id="KW-0472">Membrane</keyword>
<keyword id="KW-0479">Metal-binding</keyword>
<keyword id="KW-0602">Photosynthesis</keyword>
<keyword id="KW-0604">Photosystem II</keyword>
<keyword id="KW-1185">Reference proteome</keyword>
<keyword id="KW-0793">Thylakoid</keyword>
<keyword id="KW-0812">Transmembrane</keyword>
<keyword id="KW-1133">Transmembrane helix</keyword>
<reference key="1">
    <citation type="journal article" date="1988" name="Gene">
        <title>Nucleotide sequence and transcript analysis of three photosystem II genes from the cyanobacterium Synechococcus sp. PCC7942.</title>
        <authorList>
            <person name="Golden S.S."/>
            <person name="Stearns G.W."/>
        </authorList>
    </citation>
    <scope>NUCLEOTIDE SEQUENCE [GENOMIC DNA]</scope>
</reference>
<reference key="2">
    <citation type="submission" date="2005-08" db="EMBL/GenBank/DDBJ databases">
        <title>Complete sequence of chromosome 1 of Synechococcus elongatus PCC 7942.</title>
        <authorList>
            <consortium name="US DOE Joint Genome Institute"/>
            <person name="Copeland A."/>
            <person name="Lucas S."/>
            <person name="Lapidus A."/>
            <person name="Barry K."/>
            <person name="Detter J.C."/>
            <person name="Glavina T."/>
            <person name="Hammon N."/>
            <person name="Israni S."/>
            <person name="Pitluck S."/>
            <person name="Schmutz J."/>
            <person name="Larimer F."/>
            <person name="Land M."/>
            <person name="Kyrpides N."/>
            <person name="Lykidis A."/>
            <person name="Golden S."/>
            <person name="Richardson P."/>
        </authorList>
    </citation>
    <scope>NUCLEOTIDE SEQUENCE [LARGE SCALE GENOMIC DNA]</scope>
    <source>
        <strain>ATCC 33912 / PCC 7942 / FACHB-805</strain>
    </source>
</reference>
<evidence type="ECO:0000255" key="1">
    <source>
        <dbReference type="HAMAP-Rule" id="MF_01496"/>
    </source>
</evidence>
<evidence type="ECO:0000305" key="2"/>
<protein>
    <recommendedName>
        <fullName evidence="1">Photosystem II CP43 reaction center protein</fullName>
    </recommendedName>
    <alternativeName>
        <fullName evidence="1">PSII 43 kDa protein</fullName>
    </alternativeName>
    <alternativeName>
        <fullName evidence="1">Protein CP-43</fullName>
    </alternativeName>
</protein>
<feature type="chain" id="PRO_0000077531" description="Photosystem II CP43 reaction center protein">
    <location>
        <begin position="1"/>
        <end position="461"/>
    </location>
</feature>
<feature type="transmembrane region" description="Helical" evidence="1">
    <location>
        <begin position="57"/>
        <end position="81"/>
    </location>
</feature>
<feature type="transmembrane region" description="Helical" evidence="1">
    <location>
        <begin position="122"/>
        <end position="143"/>
    </location>
</feature>
<feature type="transmembrane region" description="Helical" evidence="1">
    <location>
        <begin position="166"/>
        <end position="188"/>
    </location>
</feature>
<feature type="transmembrane region" description="Helical" evidence="1">
    <location>
        <begin position="243"/>
        <end position="263"/>
    </location>
</feature>
<feature type="transmembrane region" description="Helical" evidence="1">
    <location>
        <begin position="279"/>
        <end position="300"/>
    </location>
</feature>
<feature type="transmembrane region" description="Helical" evidence="1">
    <location>
        <begin position="435"/>
        <end position="459"/>
    </location>
</feature>
<feature type="binding site" evidence="1">
    <location>
        <position position="355"/>
    </location>
    <ligand>
        <name>[CaMn4O5] cluster</name>
        <dbReference type="ChEBI" id="CHEBI:189552"/>
    </ligand>
</feature>
<feature type="sequence conflict" description="In Ref. 1; AAA27359." evidence="2" ref="1">
    <original>R</original>
    <variation>G</variation>
    <location>
        <position position="249"/>
    </location>
</feature>
<feature type="sequence conflict" description="In Ref. 1; AAA27359." evidence="2" ref="1">
    <original>WL</original>
    <variation>CV</variation>
    <location>
        <begin position="353"/>
        <end position="354"/>
    </location>
</feature>
<feature type="sequence conflict" description="In Ref. 1; AAA27359." evidence="2" ref="1">
    <original>H</original>
    <variation>P</variation>
    <location>
        <position position="418"/>
    </location>
</feature>
<accession>P11004</accession>
<accession>Q31QI1</accession>
<name>PSBC_SYNE7</name>
<dbReference type="EMBL" id="M20814">
    <property type="protein sequence ID" value="AAA27359.1"/>
    <property type="molecule type" value="Genomic_DNA"/>
</dbReference>
<dbReference type="EMBL" id="CP000100">
    <property type="protein sequence ID" value="ABB56688.1"/>
    <property type="molecule type" value="Genomic_DNA"/>
</dbReference>
<dbReference type="PIR" id="JT0322">
    <property type="entry name" value="JT0322"/>
</dbReference>
<dbReference type="RefSeq" id="WP_011377666.1">
    <property type="nucleotide sequence ID" value="NZ_JACJTX010000005.1"/>
</dbReference>
<dbReference type="SMR" id="P11004"/>
<dbReference type="STRING" id="1140.Synpcc7942_0656"/>
<dbReference type="TCDB" id="3.E.2.2.1">
    <property type="family name" value="the photosynthetic reaction center (prc) family"/>
</dbReference>
<dbReference type="PaxDb" id="1140-Synpcc7942_0656"/>
<dbReference type="GeneID" id="72429489"/>
<dbReference type="KEGG" id="syf:Synpcc7942_0656"/>
<dbReference type="eggNOG" id="ENOG502Z7VA">
    <property type="taxonomic scope" value="Bacteria"/>
</dbReference>
<dbReference type="HOGENOM" id="CLU_028310_1_1_3"/>
<dbReference type="OrthoDB" id="9429529at2"/>
<dbReference type="BioCyc" id="MetaCyc:SYNPCC7942_0656-MONOMER"/>
<dbReference type="BioCyc" id="SYNEL:SYNPCC7942_0656-MONOMER"/>
<dbReference type="Proteomes" id="UP000889800">
    <property type="component" value="Chromosome"/>
</dbReference>
<dbReference type="GO" id="GO:0009523">
    <property type="term" value="C:photosystem II"/>
    <property type="evidence" value="ECO:0007669"/>
    <property type="project" value="UniProtKB-KW"/>
</dbReference>
<dbReference type="GO" id="GO:0031676">
    <property type="term" value="C:plasma membrane-derived thylakoid membrane"/>
    <property type="evidence" value="ECO:0007669"/>
    <property type="project" value="UniProtKB-SubCell"/>
</dbReference>
<dbReference type="GO" id="GO:0016168">
    <property type="term" value="F:chlorophyll binding"/>
    <property type="evidence" value="ECO:0007669"/>
    <property type="project" value="UniProtKB-UniRule"/>
</dbReference>
<dbReference type="GO" id="GO:0045156">
    <property type="term" value="F:electron transporter, transferring electrons within the cyclic electron transport pathway of photosynthesis activity"/>
    <property type="evidence" value="ECO:0007669"/>
    <property type="project" value="InterPro"/>
</dbReference>
<dbReference type="GO" id="GO:0046872">
    <property type="term" value="F:metal ion binding"/>
    <property type="evidence" value="ECO:0007669"/>
    <property type="project" value="UniProtKB-KW"/>
</dbReference>
<dbReference type="GO" id="GO:0009772">
    <property type="term" value="P:photosynthetic electron transport in photosystem II"/>
    <property type="evidence" value="ECO:0007669"/>
    <property type="project" value="InterPro"/>
</dbReference>
<dbReference type="FunFam" id="1.10.10.670:FF:000001">
    <property type="entry name" value="Photosystem II CP43 reaction center protein"/>
    <property type="match status" value="1"/>
</dbReference>
<dbReference type="Gene3D" id="1.10.10.670">
    <property type="entry name" value="photosystem ii from thermosynechococcus elongatus"/>
    <property type="match status" value="1"/>
</dbReference>
<dbReference type="HAMAP" id="MF_01496">
    <property type="entry name" value="PSII_PsbC_CP43"/>
    <property type="match status" value="1"/>
</dbReference>
<dbReference type="InterPro" id="IPR000932">
    <property type="entry name" value="PS_antenna-like"/>
</dbReference>
<dbReference type="InterPro" id="IPR036001">
    <property type="entry name" value="PS_II_antenna-like_sf"/>
</dbReference>
<dbReference type="InterPro" id="IPR005869">
    <property type="entry name" value="PSII_PsbC"/>
</dbReference>
<dbReference type="InterPro" id="IPR044900">
    <property type="entry name" value="PSII_PsbC_sf"/>
</dbReference>
<dbReference type="NCBIfam" id="TIGR03041">
    <property type="entry name" value="PS_antenn_a_b"/>
    <property type="match status" value="1"/>
</dbReference>
<dbReference type="NCBIfam" id="TIGR01153">
    <property type="entry name" value="psbC"/>
    <property type="match status" value="1"/>
</dbReference>
<dbReference type="Pfam" id="PF00421">
    <property type="entry name" value="PSII"/>
    <property type="match status" value="1"/>
</dbReference>
<dbReference type="SUPFAM" id="SSF161077">
    <property type="entry name" value="Photosystem II antenna protein-like"/>
    <property type="match status" value="1"/>
</dbReference>
<sequence length="461" mass="50140">MVTLSSPSVIAGGRDIDSTGYAWWSGNARLINLSGKLLGAHVAHAGLIVFWAGAMTLFEVAHFVPEKPMYEQGIILLSHLATLGWGVGPGGEVVDTFPYFVVGVLHLISSAVLGLGGIYHALRGPESLEEYSTFFSQDWKDKNQMTNIIGYHLILLGLGAFLLVFKAMFFGGVYDTWAPGGGDVRIISNPTLNPAVIFGYLLKSPFGGDGWIVSVDNLEDVIGGHIWIGLICISGGIWHILTKPFGWVRRAFIWNGEAYLSYSLGALSLMGFIASTMVWYNNTVYPSEFFGPTAAEASQSQAFTFLVRDQRLGANIGSAQGPTGLGKYLMRSPTGEIIFGGETMRFWDFRGPWLEPLRGPNGLDLDKLTNDIQPWQARRAAEYMTHAPLGSLNSVGGVATEINSVNFVSPRAWLATSHFVLAFFFLVGHLWHAGRARAAAAGFEKGIDRATEPVLAMRDLD</sequence>
<proteinExistence type="inferred from homology"/>
<comment type="function">
    <text evidence="1">One of the components of the core complex of photosystem II (PSII). It binds chlorophyll and helps catalyze the primary light-induced photochemical processes of PSII. PSII is a light-driven water:plastoquinone oxidoreductase, using light energy to abstract electrons from H(2)O, generating O(2) and a proton gradient subsequently used for ATP formation.</text>
</comment>
<comment type="cofactor">
    <text evidence="1">Binds multiple chlorophylls and provides some of the ligands for the Ca-4Mn-5O cluster of the oxygen-evolving complex. It may also provide a ligand for a Cl- that is required for oxygen evolution. PSII binds additional chlorophylls, carotenoids and specific lipids.</text>
</comment>
<comment type="subunit">
    <text evidence="1">PSII is composed of 1 copy each of membrane proteins PsbA, PsbB, PsbC, PsbD, PsbE, PsbF, PsbH, PsbI, PsbJ, PsbK, PsbL, PsbM, PsbT, PsbX, PsbY, PsbZ, Psb30/Ycf12, peripheral proteins PsbO, CyanoQ (PsbQ), PsbU, PsbV and a large number of cofactors. It forms dimeric complexes.</text>
</comment>
<comment type="subcellular location">
    <subcellularLocation>
        <location evidence="1">Cellular thylakoid membrane</location>
        <topology evidence="1">Multi-pass membrane protein</topology>
    </subcellularLocation>
</comment>
<comment type="similarity">
    <text evidence="1">Belongs to the PsbB/PsbC family. PsbC subfamily.</text>
</comment>